<comment type="function">
    <text evidence="1">Binds 23S rRNA and is also seen to make contacts with the A and possibly P site tRNAs.</text>
</comment>
<comment type="subunit">
    <text evidence="1">Part of the 50S ribosomal subunit.</text>
</comment>
<comment type="similarity">
    <text evidence="1">Belongs to the universal ribosomal protein uL16 family.</text>
</comment>
<evidence type="ECO:0000255" key="1">
    <source>
        <dbReference type="HAMAP-Rule" id="MF_01342"/>
    </source>
</evidence>
<evidence type="ECO:0000305" key="2"/>
<proteinExistence type="inferred from homology"/>
<gene>
    <name evidence="1" type="primary">rplP</name>
    <name type="ordered locus">PLES_06721</name>
</gene>
<sequence length="137" mass="15401">MLQPKRTKFRKQMTGHNRGLAHRGSKVSFGEYALKATSRGRLTARQIESARRALTRHVKRGGKIWIRVFPDKPVTKKPLEVRMGKGKGGVEYWVAQIQPGKVLYEIEGVSEELAREAFALAAAKLPLATSFVKRTVM</sequence>
<keyword id="KW-0687">Ribonucleoprotein</keyword>
<keyword id="KW-0689">Ribosomal protein</keyword>
<keyword id="KW-0694">RNA-binding</keyword>
<keyword id="KW-0699">rRNA-binding</keyword>
<keyword id="KW-0820">tRNA-binding</keyword>
<accession>B7V651</accession>
<reference key="1">
    <citation type="journal article" date="2009" name="Genome Res.">
        <title>Newly introduced genomic prophage islands are critical determinants of in vivo competitiveness in the Liverpool epidemic strain of Pseudomonas aeruginosa.</title>
        <authorList>
            <person name="Winstanley C."/>
            <person name="Langille M.G.I."/>
            <person name="Fothergill J.L."/>
            <person name="Kukavica-Ibrulj I."/>
            <person name="Paradis-Bleau C."/>
            <person name="Sanschagrin F."/>
            <person name="Thomson N.R."/>
            <person name="Winsor G.L."/>
            <person name="Quail M.A."/>
            <person name="Lennard N."/>
            <person name="Bignell A."/>
            <person name="Clarke L."/>
            <person name="Seeger K."/>
            <person name="Saunders D."/>
            <person name="Harris D."/>
            <person name="Parkhill J."/>
            <person name="Hancock R.E.W."/>
            <person name="Brinkman F.S.L."/>
            <person name="Levesque R.C."/>
        </authorList>
    </citation>
    <scope>NUCLEOTIDE SEQUENCE [LARGE SCALE GENOMIC DNA]</scope>
    <source>
        <strain>LESB58</strain>
    </source>
</reference>
<dbReference type="EMBL" id="FM209186">
    <property type="protein sequence ID" value="CAW25399.1"/>
    <property type="molecule type" value="Genomic_DNA"/>
</dbReference>
<dbReference type="RefSeq" id="WP_003093723.1">
    <property type="nucleotide sequence ID" value="NC_011770.1"/>
</dbReference>
<dbReference type="SMR" id="B7V651"/>
<dbReference type="KEGG" id="pag:PLES_06721"/>
<dbReference type="HOGENOM" id="CLU_078858_2_1_6"/>
<dbReference type="GO" id="GO:0022625">
    <property type="term" value="C:cytosolic large ribosomal subunit"/>
    <property type="evidence" value="ECO:0007669"/>
    <property type="project" value="TreeGrafter"/>
</dbReference>
<dbReference type="GO" id="GO:0019843">
    <property type="term" value="F:rRNA binding"/>
    <property type="evidence" value="ECO:0007669"/>
    <property type="project" value="UniProtKB-UniRule"/>
</dbReference>
<dbReference type="GO" id="GO:0003735">
    <property type="term" value="F:structural constituent of ribosome"/>
    <property type="evidence" value="ECO:0007669"/>
    <property type="project" value="InterPro"/>
</dbReference>
<dbReference type="GO" id="GO:0000049">
    <property type="term" value="F:tRNA binding"/>
    <property type="evidence" value="ECO:0007669"/>
    <property type="project" value="UniProtKB-KW"/>
</dbReference>
<dbReference type="GO" id="GO:0006412">
    <property type="term" value="P:translation"/>
    <property type="evidence" value="ECO:0007669"/>
    <property type="project" value="UniProtKB-UniRule"/>
</dbReference>
<dbReference type="CDD" id="cd01433">
    <property type="entry name" value="Ribosomal_L16_L10e"/>
    <property type="match status" value="1"/>
</dbReference>
<dbReference type="FunFam" id="3.90.1170.10:FF:000001">
    <property type="entry name" value="50S ribosomal protein L16"/>
    <property type="match status" value="1"/>
</dbReference>
<dbReference type="Gene3D" id="3.90.1170.10">
    <property type="entry name" value="Ribosomal protein L10e/L16"/>
    <property type="match status" value="1"/>
</dbReference>
<dbReference type="HAMAP" id="MF_01342">
    <property type="entry name" value="Ribosomal_uL16"/>
    <property type="match status" value="1"/>
</dbReference>
<dbReference type="InterPro" id="IPR047873">
    <property type="entry name" value="Ribosomal_uL16"/>
</dbReference>
<dbReference type="InterPro" id="IPR000114">
    <property type="entry name" value="Ribosomal_uL16_bact-type"/>
</dbReference>
<dbReference type="InterPro" id="IPR020798">
    <property type="entry name" value="Ribosomal_uL16_CS"/>
</dbReference>
<dbReference type="InterPro" id="IPR016180">
    <property type="entry name" value="Ribosomal_uL16_dom"/>
</dbReference>
<dbReference type="InterPro" id="IPR036920">
    <property type="entry name" value="Ribosomal_uL16_sf"/>
</dbReference>
<dbReference type="NCBIfam" id="TIGR01164">
    <property type="entry name" value="rplP_bact"/>
    <property type="match status" value="1"/>
</dbReference>
<dbReference type="PANTHER" id="PTHR12220">
    <property type="entry name" value="50S/60S RIBOSOMAL PROTEIN L16"/>
    <property type="match status" value="1"/>
</dbReference>
<dbReference type="PANTHER" id="PTHR12220:SF13">
    <property type="entry name" value="LARGE RIBOSOMAL SUBUNIT PROTEIN UL16M"/>
    <property type="match status" value="1"/>
</dbReference>
<dbReference type="Pfam" id="PF00252">
    <property type="entry name" value="Ribosomal_L16"/>
    <property type="match status" value="1"/>
</dbReference>
<dbReference type="PRINTS" id="PR00060">
    <property type="entry name" value="RIBOSOMALL16"/>
</dbReference>
<dbReference type="SUPFAM" id="SSF54686">
    <property type="entry name" value="Ribosomal protein L16p/L10e"/>
    <property type="match status" value="1"/>
</dbReference>
<dbReference type="PROSITE" id="PS00586">
    <property type="entry name" value="RIBOSOMAL_L16_1"/>
    <property type="match status" value="1"/>
</dbReference>
<dbReference type="PROSITE" id="PS00701">
    <property type="entry name" value="RIBOSOMAL_L16_2"/>
    <property type="match status" value="1"/>
</dbReference>
<name>RL16_PSEA8</name>
<protein>
    <recommendedName>
        <fullName evidence="1">Large ribosomal subunit protein uL16</fullName>
    </recommendedName>
    <alternativeName>
        <fullName evidence="2">50S ribosomal protein L16</fullName>
    </alternativeName>
</protein>
<organism>
    <name type="scientific">Pseudomonas aeruginosa (strain LESB58)</name>
    <dbReference type="NCBI Taxonomy" id="557722"/>
    <lineage>
        <taxon>Bacteria</taxon>
        <taxon>Pseudomonadati</taxon>
        <taxon>Pseudomonadota</taxon>
        <taxon>Gammaproteobacteria</taxon>
        <taxon>Pseudomonadales</taxon>
        <taxon>Pseudomonadaceae</taxon>
        <taxon>Pseudomonas</taxon>
    </lineage>
</organism>
<feature type="chain" id="PRO_1000143013" description="Large ribosomal subunit protein uL16">
    <location>
        <begin position="1"/>
        <end position="137"/>
    </location>
</feature>